<proteinExistence type="evidence at transcript level"/>
<keyword id="KW-0051">Antiviral defense</keyword>
<keyword id="KW-0202">Cytokine</keyword>
<keyword id="KW-1015">Disulfide bond</keyword>
<keyword id="KW-0325">Glycoprotein</keyword>
<keyword id="KW-0372">Hormone</keyword>
<keyword id="KW-0635">Pregnancy</keyword>
<keyword id="KW-0964">Secreted</keyword>
<keyword id="KW-0732">Signal</keyword>
<evidence type="ECO:0000250" key="1"/>
<evidence type="ECO:0000255" key="2"/>
<evidence type="ECO:0000305" key="3"/>
<name>IFNT_OVIMO</name>
<accession>P28172</accession>
<reference key="1">
    <citation type="journal article" date="1992" name="J. Interferon Res.">
        <title>Genes for the trophoblast interferons in sheep, goat, and musk ox and distribution of related genes among mammals.</title>
        <authorList>
            <person name="Leaman D.W."/>
            <person name="Roberts R.M."/>
        </authorList>
    </citation>
    <scope>NUCLEOTIDE SEQUENCE [GENOMIC DNA]</scope>
</reference>
<reference key="2">
    <citation type="journal article" date="1998" name="Biochimie">
        <title>IFN-tau: a novel subtype I IFN1. Structural characteristics, non-ubiquitous expression, structure-function relationships, a pregnancy hormonal embryonic signal and cross-species therapeutic potentialities.</title>
        <authorList>
            <person name="Martal J.L."/>
            <person name="Chene N.M."/>
            <person name="Huynh L.P."/>
            <person name="L'Haridon R.M."/>
            <person name="Reinaud P.B."/>
            <person name="Guillomot M.W."/>
            <person name="Charlier M.A."/>
            <person name="Charpigny S.Y."/>
        </authorList>
    </citation>
    <scope>REVIEW</scope>
</reference>
<comment type="function">
    <text>Paracrine hormone primarily responsible for maternal recognition of pregnancy. Interacts with endometrial receptors, probably type I interferon receptors, and blocks estrogen receptor expression, preventing the estrogen-induced increase in oxytocin receptor expression in the endometrium. This results in the suppression of the pulsatile endometrial release of the luteolytic hormone prostaglandin F2-alpha, hindering the regression of the corpus luteum (luteolysis) and therefore a return to ovarian cyclicity. This, and a possible direct effect of IFN-tau on prostaglandin synthesis, leads in turn to continued ovarian progesterone secretion, which stimulates the secretion by the endometrium of the nutrients required for the growth of the conceptus. In summary, displays particularly high antiviral and antiproliferative potency concurrently with particular weak cytotoxicity, high antiluteolytic activity and immunomodulatory properties. In contrast with other IFNs, IFN-tau is not virally inducible.</text>
</comment>
<comment type="subcellular location">
    <subcellularLocation>
        <location>Secreted</location>
    </subcellularLocation>
    <text>Secreted into the uterine lumen.</text>
</comment>
<comment type="tissue specificity">
    <text>Constitutively and exclusively expressed in the mononuclear cells of the extraembryonic trophectoderm.</text>
</comment>
<comment type="developmental stage">
    <text>Major secretory product synthesized by the conceptus during a very short period in early pregnancy.</text>
</comment>
<comment type="miscellaneous">
    <text>IFN-tau genes are intronless. They evolved from IFN-omega genes in the ruminantia suborder and have continued to duplicate independently in different lineages of the ruminantia. They code for proteins very similar in sequence but with different biological potency and pattern of expression.</text>
</comment>
<comment type="similarity">
    <text evidence="3">Belongs to the alpha/beta interferon family. IFN-alphaII subfamily.</text>
</comment>
<feature type="signal peptide" evidence="1">
    <location>
        <begin position="1"/>
        <end position="23"/>
    </location>
</feature>
<feature type="chain" id="PRO_0000016426" description="Interferon tau">
    <location>
        <begin position="24"/>
        <end position="195"/>
    </location>
</feature>
<feature type="glycosylation site" description="N-linked (GlcNAc...) asparagine" evidence="2">
    <location>
        <position position="101"/>
    </location>
</feature>
<feature type="disulfide bond" evidence="1">
    <location>
        <begin position="24"/>
        <end position="122"/>
    </location>
</feature>
<feature type="disulfide bond" evidence="1">
    <location>
        <begin position="52"/>
        <end position="162"/>
    </location>
</feature>
<organism>
    <name type="scientific">Ovibos moschatus</name>
    <name type="common">Muskox</name>
    <dbReference type="NCBI Taxonomy" id="37176"/>
    <lineage>
        <taxon>Eukaryota</taxon>
        <taxon>Metazoa</taxon>
        <taxon>Chordata</taxon>
        <taxon>Craniata</taxon>
        <taxon>Vertebrata</taxon>
        <taxon>Euteleostomi</taxon>
        <taxon>Mammalia</taxon>
        <taxon>Eutheria</taxon>
        <taxon>Laurasiatheria</taxon>
        <taxon>Artiodactyla</taxon>
        <taxon>Ruminantia</taxon>
        <taxon>Pecora</taxon>
        <taxon>Bovidae</taxon>
        <taxon>Caprinae</taxon>
        <taxon>Ovibos</taxon>
    </lineage>
</organism>
<protein>
    <recommendedName>
        <fullName>Interferon tau</fullName>
        <shortName>IFN-tau</shortName>
    </recommendedName>
    <alternativeName>
        <fullName>Antiluteolysin</fullName>
    </alternativeName>
    <alternativeName>
        <fullName>Trophoblast antiluteolytic protein</fullName>
    </alternativeName>
    <alternativeName>
        <fullName>Trophoblast protein 1</fullName>
        <shortName>TP-1</shortName>
    </alternativeName>
    <alternativeName>
        <fullName>Trophoblastin</fullName>
    </alternativeName>
</protein>
<sequence>MAFVLSLRMALVLVSYCPGGSLGCYLSRRPTLDVRENLRLLDRMNRLSPHSCQQDRKDFGLPQEMVEGDQLQKDQALSVLYEMLQQRFNLFHTEHSCAAWNTTLLEQLRTGLHQQLEDLDTCRGPVMGEKDSELGKMDPIVTVKKYFQGIYDYLQEKGYSDCAWEIVRVEMMRALTSSTTLQKRLKKTGGDLNSP</sequence>
<gene>
    <name type="primary">IFNT</name>
    <name type="synonym">IFN</name>
</gene>
<dbReference type="EMBL" id="M73244">
    <property type="protein sequence ID" value="AAA31583.1"/>
    <property type="molecule type" value="Genomic_DNA"/>
</dbReference>
<dbReference type="SMR" id="P28172"/>
<dbReference type="GlyCosmos" id="P28172">
    <property type="glycosylation" value="1 site, No reported glycans"/>
</dbReference>
<dbReference type="GO" id="GO:0005615">
    <property type="term" value="C:extracellular space"/>
    <property type="evidence" value="ECO:0007669"/>
    <property type="project" value="UniProtKB-KW"/>
</dbReference>
<dbReference type="GO" id="GO:0005125">
    <property type="term" value="F:cytokine activity"/>
    <property type="evidence" value="ECO:0007669"/>
    <property type="project" value="UniProtKB-KW"/>
</dbReference>
<dbReference type="GO" id="GO:0005126">
    <property type="term" value="F:cytokine receptor binding"/>
    <property type="evidence" value="ECO:0007669"/>
    <property type="project" value="InterPro"/>
</dbReference>
<dbReference type="GO" id="GO:0005179">
    <property type="term" value="F:hormone activity"/>
    <property type="evidence" value="ECO:0007669"/>
    <property type="project" value="UniProtKB-KW"/>
</dbReference>
<dbReference type="GO" id="GO:0051607">
    <property type="term" value="P:defense response to virus"/>
    <property type="evidence" value="ECO:0007669"/>
    <property type="project" value="UniProtKB-KW"/>
</dbReference>
<dbReference type="GO" id="GO:0007565">
    <property type="term" value="P:female pregnancy"/>
    <property type="evidence" value="ECO:0007669"/>
    <property type="project" value="UniProtKB-KW"/>
</dbReference>
<dbReference type="CDD" id="cd00095">
    <property type="entry name" value="IFab"/>
    <property type="match status" value="1"/>
</dbReference>
<dbReference type="FunFam" id="1.20.1250.10:FF:000001">
    <property type="entry name" value="Interferon alpha"/>
    <property type="match status" value="1"/>
</dbReference>
<dbReference type="Gene3D" id="1.20.1250.10">
    <property type="match status" value="1"/>
</dbReference>
<dbReference type="InterPro" id="IPR009079">
    <property type="entry name" value="4_helix_cytokine-like_core"/>
</dbReference>
<dbReference type="InterPro" id="IPR000471">
    <property type="entry name" value="Interferon_alpha/beta/delta"/>
</dbReference>
<dbReference type="PANTHER" id="PTHR11691:SF37">
    <property type="entry name" value="INTERFERON OMEGA-1"/>
    <property type="match status" value="1"/>
</dbReference>
<dbReference type="PANTHER" id="PTHR11691">
    <property type="entry name" value="TYPE I INTERFERON"/>
    <property type="match status" value="1"/>
</dbReference>
<dbReference type="Pfam" id="PF00143">
    <property type="entry name" value="Interferon"/>
    <property type="match status" value="1"/>
</dbReference>
<dbReference type="PRINTS" id="PR00266">
    <property type="entry name" value="INTERFERONAB"/>
</dbReference>
<dbReference type="SMART" id="SM00076">
    <property type="entry name" value="IFabd"/>
    <property type="match status" value="1"/>
</dbReference>
<dbReference type="SUPFAM" id="SSF47266">
    <property type="entry name" value="4-helical cytokines"/>
    <property type="match status" value="1"/>
</dbReference>
<dbReference type="PROSITE" id="PS00252">
    <property type="entry name" value="INTERFERON_A_B_D"/>
    <property type="match status" value="1"/>
</dbReference>